<accession>A5DCL4</accession>
<comment type="function">
    <text evidence="1">Component of the ERMES/MDM complex, which serves as a molecular tether to connect the endoplasmic reticulum and mitochondria. Components of this complex are involved in the control of mitochondrial shape and protein biogenesis and may function in phospholipid exchange. MDM10 is involved in the late assembly steps of the general translocase of the mitochondrial outer membrane (TOM complex). Functions in the TOM40-specific route of the assembly of outer membrane beta-barrel proteins, including the association of TOM40 with the receptor TOM22 and small TOM proteins. Can associate with the SAM(core) complex as well as the MDM12-MMM1 complex, both involved in late steps of the major beta-barrel assembly pathway, that is responsible for biogenesis of all outer membrane beta-barrel proteins. May act as a switch that shuttles between both complexes and channels precursor proteins into the TOM40-specific pathway. Plays a role in mitochondrial morphology and in the inheritance of mitochondria.</text>
</comment>
<comment type="subunit">
    <text evidence="1">Component of the ER-mitochondria encounter structure (ERMES) or MDM complex, composed of MMM1, MDM10, MDM12 and MDM34. Associates with the mitochondrial outer membrane sorting assembly machinery SAM(core) complex.</text>
</comment>
<comment type="subcellular location">
    <subcellularLocation>
        <location evidence="1">Mitochondrion outer membrane</location>
        <topology evidence="1">Multi-pass membrane protein</topology>
    </subcellularLocation>
    <text evidence="1">The ERMES/MDM complex localizes to a few discrete foci (around 10 per single cell), that represent mitochondria-endoplasmic reticulum junctions. These foci are often found next to mtDNA nucleoids.</text>
</comment>
<comment type="domain">
    <text>Lacks alpha-helical transmembrane segments, suggesting that it resides in the membrane via beta-sheet conformations similar to those predicted for other outer membrane proteins and porin.</text>
</comment>
<comment type="similarity">
    <text evidence="1">Belongs to the MDM10 family.</text>
</comment>
<comment type="sequence caution" evidence="2">
    <conflict type="erroneous initiation">
        <sequence resource="EMBL-CDS" id="EDK36921"/>
    </conflict>
    <text>Truncated N-terminus.</text>
</comment>
<comment type="sequence caution" evidence="2">
    <conflict type="frameshift">
        <sequence resource="EMBL-CDS" id="EDK36921"/>
    </conflict>
</comment>
<proteinExistence type="inferred from homology"/>
<feature type="chain" id="PRO_0000384192" description="Mitochondrial distribution and morphology protein 10">
    <location>
        <begin position="1"/>
        <end position="418"/>
    </location>
</feature>
<evidence type="ECO:0000255" key="1">
    <source>
        <dbReference type="HAMAP-Rule" id="MF_03102"/>
    </source>
</evidence>
<evidence type="ECO:0000305" key="2"/>
<name>MDM10_PICGU</name>
<sequence length="418" mass="46383">MYTYMEYLQKCFFHATRWNEDNIYSNITASSHALLEFLVPSGLKMDVSSRSSPNSASSFTLSNHHSLNGSLAYMYSSTQLKGTPGTRRIPLQDAIAGFKIVEPNEMRPSASGTIAPSSLLYGRMYFPGAALEAMVIRRFSPHTQLLIKCIHNPQLDKNGTLIAYFQKNTQRYSREVIYSTNDALVGFRGLYNIGSTPSWSPSPPNFDRSVVSVGAELWYAARTMSPGLSTGLRYSTRSTSTGKPLTMTLACNPILGHISSTYTVKTSVASTFCSRYDFNLFSYASNLSLGFELFNFDKNAAVERNPQLPTPTTNPSASKQNLINPIRDHSYYQTTPSTNATTYQSSQTISDSFQKLVNRSEFSSVVKVSTSLNDRLVRLLWEGRFKDFLVSSGVKVSLNPATNAVELNRFGISFSYAS</sequence>
<gene>
    <name evidence="1" type="primary">MDM10</name>
    <name type="ORF">PGUG_01019</name>
</gene>
<keyword id="KW-0472">Membrane</keyword>
<keyword id="KW-0496">Mitochondrion</keyword>
<keyword id="KW-1000">Mitochondrion outer membrane</keyword>
<keyword id="KW-1185">Reference proteome</keyword>
<keyword id="KW-0812">Transmembrane</keyword>
<keyword id="KW-1134">Transmembrane beta strand</keyword>
<organism>
    <name type="scientific">Meyerozyma guilliermondii (strain ATCC 6260 / CBS 566 / DSM 6381 / JCM 1539 / NBRC 10279 / NRRL Y-324)</name>
    <name type="common">Yeast</name>
    <name type="synonym">Candida guilliermondii</name>
    <dbReference type="NCBI Taxonomy" id="294746"/>
    <lineage>
        <taxon>Eukaryota</taxon>
        <taxon>Fungi</taxon>
        <taxon>Dikarya</taxon>
        <taxon>Ascomycota</taxon>
        <taxon>Saccharomycotina</taxon>
        <taxon>Pichiomycetes</taxon>
        <taxon>Debaryomycetaceae</taxon>
        <taxon>Meyerozyma</taxon>
    </lineage>
</organism>
<protein>
    <recommendedName>
        <fullName evidence="1">Mitochondrial distribution and morphology protein 10</fullName>
    </recommendedName>
    <alternativeName>
        <fullName evidence="1">Mitochondrial inheritance component MDM10</fullName>
    </alternativeName>
</protein>
<reference key="1">
    <citation type="journal article" date="2009" name="Nature">
        <title>Evolution of pathogenicity and sexual reproduction in eight Candida genomes.</title>
        <authorList>
            <person name="Butler G."/>
            <person name="Rasmussen M.D."/>
            <person name="Lin M.F."/>
            <person name="Santos M.A.S."/>
            <person name="Sakthikumar S."/>
            <person name="Munro C.A."/>
            <person name="Rheinbay E."/>
            <person name="Grabherr M."/>
            <person name="Forche A."/>
            <person name="Reedy J.L."/>
            <person name="Agrafioti I."/>
            <person name="Arnaud M.B."/>
            <person name="Bates S."/>
            <person name="Brown A.J.P."/>
            <person name="Brunke S."/>
            <person name="Costanzo M.C."/>
            <person name="Fitzpatrick D.A."/>
            <person name="de Groot P.W.J."/>
            <person name="Harris D."/>
            <person name="Hoyer L.L."/>
            <person name="Hube B."/>
            <person name="Klis F.M."/>
            <person name="Kodira C."/>
            <person name="Lennard N."/>
            <person name="Logue M.E."/>
            <person name="Martin R."/>
            <person name="Neiman A.M."/>
            <person name="Nikolaou E."/>
            <person name="Quail M.A."/>
            <person name="Quinn J."/>
            <person name="Santos M.C."/>
            <person name="Schmitzberger F.F."/>
            <person name="Sherlock G."/>
            <person name="Shah P."/>
            <person name="Silverstein K.A.T."/>
            <person name="Skrzypek M.S."/>
            <person name="Soll D."/>
            <person name="Staggs R."/>
            <person name="Stansfield I."/>
            <person name="Stumpf M.P.H."/>
            <person name="Sudbery P.E."/>
            <person name="Srikantha T."/>
            <person name="Zeng Q."/>
            <person name="Berman J."/>
            <person name="Berriman M."/>
            <person name="Heitman J."/>
            <person name="Gow N.A.R."/>
            <person name="Lorenz M.C."/>
            <person name="Birren B.W."/>
            <person name="Kellis M."/>
            <person name="Cuomo C.A."/>
        </authorList>
    </citation>
    <scope>NUCLEOTIDE SEQUENCE [LARGE SCALE GENOMIC DNA]</scope>
    <source>
        <strain>ATCC 6260 / CBS 566 / DSM 6381 / JCM 1539 / NBRC 10279 / NRRL Y-324</strain>
    </source>
</reference>
<dbReference type="EMBL" id="CH408155">
    <property type="protein sequence ID" value="EDK36921.2"/>
    <property type="status" value="ALT_SEQ"/>
    <property type="molecule type" value="Genomic_DNA"/>
</dbReference>
<dbReference type="RefSeq" id="XP_001487642.1">
    <property type="nucleotide sequence ID" value="XM_001487592.1"/>
</dbReference>
<dbReference type="SMR" id="A5DCL4"/>
<dbReference type="FunCoup" id="A5DCL4">
    <property type="interactions" value="68"/>
</dbReference>
<dbReference type="STRING" id="294746.A5DCL4"/>
<dbReference type="GeneID" id="5129764"/>
<dbReference type="KEGG" id="pgu:PGUG_01019"/>
<dbReference type="eggNOG" id="ENOG502QUN5">
    <property type="taxonomic scope" value="Eukaryota"/>
</dbReference>
<dbReference type="HOGENOM" id="CLU_026505_0_0_1"/>
<dbReference type="InParanoid" id="A5DCL4"/>
<dbReference type="OrthoDB" id="2103793at2759"/>
<dbReference type="Proteomes" id="UP000001997">
    <property type="component" value="Unassembled WGS sequence"/>
</dbReference>
<dbReference type="GO" id="GO:0032865">
    <property type="term" value="C:ERMES complex"/>
    <property type="evidence" value="ECO:0007669"/>
    <property type="project" value="UniProtKB-UniRule"/>
</dbReference>
<dbReference type="GO" id="GO:0001401">
    <property type="term" value="C:SAM complex"/>
    <property type="evidence" value="ECO:0007669"/>
    <property type="project" value="TreeGrafter"/>
</dbReference>
<dbReference type="GO" id="GO:0051654">
    <property type="term" value="P:establishment of mitochondrion localization"/>
    <property type="evidence" value="ECO:0007669"/>
    <property type="project" value="TreeGrafter"/>
</dbReference>
<dbReference type="GO" id="GO:0000002">
    <property type="term" value="P:mitochondrial genome maintenance"/>
    <property type="evidence" value="ECO:0007669"/>
    <property type="project" value="UniProtKB-UniRule"/>
</dbReference>
<dbReference type="GO" id="GO:0070096">
    <property type="term" value="P:mitochondrial outer membrane translocase complex assembly"/>
    <property type="evidence" value="ECO:0007669"/>
    <property type="project" value="UniProtKB-UniRule"/>
</dbReference>
<dbReference type="GO" id="GO:1990456">
    <property type="term" value="P:mitochondrion-endoplasmic reticulum membrane tethering"/>
    <property type="evidence" value="ECO:0007669"/>
    <property type="project" value="UniProtKB-UniRule"/>
</dbReference>
<dbReference type="GO" id="GO:0015914">
    <property type="term" value="P:phospholipid transport"/>
    <property type="evidence" value="ECO:0007669"/>
    <property type="project" value="TreeGrafter"/>
</dbReference>
<dbReference type="GO" id="GO:0045040">
    <property type="term" value="P:protein insertion into mitochondrial outer membrane"/>
    <property type="evidence" value="ECO:0007669"/>
    <property type="project" value="UniProtKB-UniRule"/>
</dbReference>
<dbReference type="HAMAP" id="MF_03102">
    <property type="entry name" value="Mdm10"/>
    <property type="match status" value="1"/>
</dbReference>
<dbReference type="InterPro" id="IPR027539">
    <property type="entry name" value="Mdm10"/>
</dbReference>
<dbReference type="PANTHER" id="PTHR28035">
    <property type="entry name" value="MITOCHONDRIAL DISTRIBUTION AND MORPHOLOGY PROTEIN 10"/>
    <property type="match status" value="1"/>
</dbReference>
<dbReference type="PANTHER" id="PTHR28035:SF1">
    <property type="entry name" value="MITOCHONDRIAL DISTRIBUTION AND MORPHOLOGY PROTEIN 10"/>
    <property type="match status" value="1"/>
</dbReference>
<dbReference type="Pfam" id="PF12519">
    <property type="entry name" value="MDM10"/>
    <property type="match status" value="1"/>
</dbReference>